<accession>Q2NQS8</accession>
<reference key="1">
    <citation type="journal article" date="2006" name="Genome Res.">
        <title>Massive genome erosion and functional adaptations provide insights into the symbiotic lifestyle of Sodalis glossinidius in the tsetse host.</title>
        <authorList>
            <person name="Toh H."/>
            <person name="Weiss B.L."/>
            <person name="Perkin S.A.H."/>
            <person name="Yamashita A."/>
            <person name="Oshima K."/>
            <person name="Hattori M."/>
            <person name="Aksoy S."/>
        </authorList>
    </citation>
    <scope>NUCLEOTIDE SEQUENCE [LARGE SCALE GENOMIC DNA]</scope>
    <source>
        <strain>morsitans</strain>
    </source>
</reference>
<evidence type="ECO:0000255" key="1">
    <source>
        <dbReference type="HAMAP-Rule" id="MF_00366"/>
    </source>
</evidence>
<proteinExistence type="inferred from homology"/>
<keyword id="KW-0240">DNA-directed RNA polymerase</keyword>
<keyword id="KW-0548">Nucleotidyltransferase</keyword>
<keyword id="KW-0804">Transcription</keyword>
<keyword id="KW-0808">Transferase</keyword>
<gene>
    <name evidence="1" type="primary">rpoZ</name>
    <name type="ordered locus">SG2222</name>
</gene>
<dbReference type="EC" id="2.7.7.6" evidence="1"/>
<dbReference type="EMBL" id="AP008232">
    <property type="protein sequence ID" value="BAE75497.1"/>
    <property type="molecule type" value="Genomic_DNA"/>
</dbReference>
<dbReference type="RefSeq" id="WP_011412033.1">
    <property type="nucleotide sequence ID" value="NZ_LN854557.1"/>
</dbReference>
<dbReference type="SMR" id="Q2NQS8"/>
<dbReference type="STRING" id="343509.SG2222"/>
<dbReference type="KEGG" id="sgl:SG2222"/>
<dbReference type="eggNOG" id="COG1758">
    <property type="taxonomic scope" value="Bacteria"/>
</dbReference>
<dbReference type="HOGENOM" id="CLU_125406_5_3_6"/>
<dbReference type="OrthoDB" id="9796300at2"/>
<dbReference type="Proteomes" id="UP000001932">
    <property type="component" value="Chromosome"/>
</dbReference>
<dbReference type="GO" id="GO:0000428">
    <property type="term" value="C:DNA-directed RNA polymerase complex"/>
    <property type="evidence" value="ECO:0007669"/>
    <property type="project" value="UniProtKB-KW"/>
</dbReference>
<dbReference type="GO" id="GO:0003677">
    <property type="term" value="F:DNA binding"/>
    <property type="evidence" value="ECO:0007669"/>
    <property type="project" value="UniProtKB-UniRule"/>
</dbReference>
<dbReference type="GO" id="GO:0003899">
    <property type="term" value="F:DNA-directed RNA polymerase activity"/>
    <property type="evidence" value="ECO:0007669"/>
    <property type="project" value="UniProtKB-UniRule"/>
</dbReference>
<dbReference type="GO" id="GO:0006351">
    <property type="term" value="P:DNA-templated transcription"/>
    <property type="evidence" value="ECO:0007669"/>
    <property type="project" value="UniProtKB-UniRule"/>
</dbReference>
<dbReference type="FunFam" id="3.90.940.10:FF:000001">
    <property type="entry name" value="DNA-directed RNA polymerase subunit omega"/>
    <property type="match status" value="1"/>
</dbReference>
<dbReference type="Gene3D" id="3.90.940.10">
    <property type="match status" value="1"/>
</dbReference>
<dbReference type="HAMAP" id="MF_00366">
    <property type="entry name" value="RNApol_bact_RpoZ"/>
    <property type="match status" value="1"/>
</dbReference>
<dbReference type="InterPro" id="IPR003716">
    <property type="entry name" value="DNA-dir_RNA_pol_omega"/>
</dbReference>
<dbReference type="InterPro" id="IPR006110">
    <property type="entry name" value="Pol_omega/Rpo6/RPB6"/>
</dbReference>
<dbReference type="InterPro" id="IPR036161">
    <property type="entry name" value="RPB6/omega-like_sf"/>
</dbReference>
<dbReference type="NCBIfam" id="TIGR00690">
    <property type="entry name" value="rpoZ"/>
    <property type="match status" value="1"/>
</dbReference>
<dbReference type="PANTHER" id="PTHR34476">
    <property type="entry name" value="DNA-DIRECTED RNA POLYMERASE SUBUNIT OMEGA"/>
    <property type="match status" value="1"/>
</dbReference>
<dbReference type="PANTHER" id="PTHR34476:SF1">
    <property type="entry name" value="DNA-DIRECTED RNA POLYMERASE SUBUNIT OMEGA"/>
    <property type="match status" value="1"/>
</dbReference>
<dbReference type="Pfam" id="PF01192">
    <property type="entry name" value="RNA_pol_Rpb6"/>
    <property type="match status" value="1"/>
</dbReference>
<dbReference type="SMART" id="SM01409">
    <property type="entry name" value="RNA_pol_Rpb6"/>
    <property type="match status" value="1"/>
</dbReference>
<dbReference type="SUPFAM" id="SSF63562">
    <property type="entry name" value="RPB6/omega subunit-like"/>
    <property type="match status" value="1"/>
</dbReference>
<protein>
    <recommendedName>
        <fullName evidence="1">DNA-directed RNA polymerase subunit omega</fullName>
        <shortName evidence="1">RNAP omega subunit</shortName>
        <ecNumber evidence="1">2.7.7.6</ecNumber>
    </recommendedName>
    <alternativeName>
        <fullName evidence="1">RNA polymerase omega subunit</fullName>
    </alternativeName>
    <alternativeName>
        <fullName evidence="1">Transcriptase subunit omega</fullName>
    </alternativeName>
</protein>
<feature type="chain" id="PRO_0000237508" description="DNA-directed RNA polymerase subunit omega">
    <location>
        <begin position="1"/>
        <end position="91"/>
    </location>
</feature>
<name>RPOZ_SODGM</name>
<organism>
    <name type="scientific">Sodalis glossinidius (strain morsitans)</name>
    <dbReference type="NCBI Taxonomy" id="343509"/>
    <lineage>
        <taxon>Bacteria</taxon>
        <taxon>Pseudomonadati</taxon>
        <taxon>Pseudomonadota</taxon>
        <taxon>Gammaproteobacteria</taxon>
        <taxon>Enterobacterales</taxon>
        <taxon>Bruguierivoracaceae</taxon>
        <taxon>Sodalis</taxon>
    </lineage>
</organism>
<sequence>MARVTVQDAVEKIGNRFDLVLVAARRARQIQVGGKDPLVAEENDKYTVIALREIEEGLITSQILDLRDRQEQQEQEAAEIQAVTAIAEGRR</sequence>
<comment type="function">
    <text evidence="1">Promotes RNA polymerase assembly. Latches the N- and C-terminal regions of the beta' subunit thereby facilitating its interaction with the beta and alpha subunits.</text>
</comment>
<comment type="catalytic activity">
    <reaction evidence="1">
        <text>RNA(n) + a ribonucleoside 5'-triphosphate = RNA(n+1) + diphosphate</text>
        <dbReference type="Rhea" id="RHEA:21248"/>
        <dbReference type="Rhea" id="RHEA-COMP:14527"/>
        <dbReference type="Rhea" id="RHEA-COMP:17342"/>
        <dbReference type="ChEBI" id="CHEBI:33019"/>
        <dbReference type="ChEBI" id="CHEBI:61557"/>
        <dbReference type="ChEBI" id="CHEBI:140395"/>
        <dbReference type="EC" id="2.7.7.6"/>
    </reaction>
</comment>
<comment type="subunit">
    <text evidence="1">The RNAP catalytic core consists of 2 alpha, 1 beta, 1 beta' and 1 omega subunit. When a sigma factor is associated with the core the holoenzyme is formed, which can initiate transcription.</text>
</comment>
<comment type="similarity">
    <text evidence="1">Belongs to the RNA polymerase subunit omega family.</text>
</comment>